<proteinExistence type="predicted"/>
<organism>
    <name type="scientific">Trypanosoma brucei brucei</name>
    <dbReference type="NCBI Taxonomy" id="5702"/>
    <lineage>
        <taxon>Eukaryota</taxon>
        <taxon>Discoba</taxon>
        <taxon>Euglenozoa</taxon>
        <taxon>Kinetoplastea</taxon>
        <taxon>Metakinetoplastina</taxon>
        <taxon>Trypanosomatida</taxon>
        <taxon>Trypanosomatidae</taxon>
        <taxon>Trypanosoma</taxon>
    </lineage>
</organism>
<reference key="1">
    <citation type="journal article" date="1990" name="Nucleic Acids Res.">
        <title>The genes encoding fructose bisphosphate aldolase in Trypanosoma brucei are interspersed with unrelated genes.</title>
        <authorList>
            <person name="Vijayasarathy S."/>
            <person name="Ernest I."/>
            <person name="Itzhaki J."/>
            <person name="Sherman D."/>
            <person name="Mowatt M.R."/>
            <person name="Michels P.A.M."/>
            <person name="Clayton C.E."/>
        </authorList>
    </citation>
    <scope>NUCLEOTIDE SEQUENCE [GENOMIC DNA]</scope>
    <source>
        <strain>427</strain>
    </source>
</reference>
<feature type="chain" id="PRO_0000066120" description="Uncharacterized 22 kDa protein in aldolase locus">
    <location>
        <begin position="1"/>
        <end position="185"/>
    </location>
</feature>
<dbReference type="EMBL" id="X52586">
    <property type="protein sequence ID" value="CAA36820.1"/>
    <property type="molecule type" value="Genomic_DNA"/>
</dbReference>
<dbReference type="EMBL" id="X52587">
    <property type="protein sequence ID" value="CAA36822.1"/>
    <property type="molecule type" value="Genomic_DNA"/>
</dbReference>
<dbReference type="PIR" id="S12676">
    <property type="entry name" value="S12676"/>
</dbReference>
<dbReference type="SMR" id="P17960"/>
<dbReference type="InterPro" id="IPR039963">
    <property type="entry name" value="Unchar_22kDa"/>
</dbReference>
<dbReference type="PANTHER" id="PTHR38828">
    <property type="match status" value="1"/>
</dbReference>
<dbReference type="PANTHER" id="PTHR38828:SF4">
    <property type="match status" value="1"/>
</dbReference>
<name>YALI_TRYBB</name>
<accession>P17960</accession>
<sequence>MDDGVEAKPLCLTREQIDKQVERLSRRPEQRTLPDPFPVCPTVRMSKEQLEQVTKRVFYHYSEKHAEALRLAEERREKECGVASTVLSASDVDDIVKRLYYEGMERVKVGRKEASDRLLFKSTKVLPVISLKRFVNDMYLRGLEREKKKEEKLYEKYILPTEIPNLRISKSQAAESAMRLSRRHE</sequence>
<protein>
    <recommendedName>
        <fullName>Uncharacterized 22 kDa protein in aldolase locus</fullName>
    </recommendedName>
    <alternativeName>
        <fullName>ORFI</fullName>
    </alternativeName>
</protein>